<accession>Q8J2Q9</accession>
<accession>W7LUF8</accession>
<dbReference type="EMBL" id="AF155773">
    <property type="protein sequence ID" value="AAN74814.2"/>
    <property type="molecule type" value="Genomic_DNA"/>
</dbReference>
<dbReference type="EMBL" id="CM000578">
    <property type="protein sequence ID" value="EWG36202.1"/>
    <property type="status" value="ALT_SEQ"/>
    <property type="molecule type" value="Genomic_DNA"/>
</dbReference>
<dbReference type="RefSeq" id="XP_018742393.1">
    <property type="nucleotide sequence ID" value="XM_018886759.1"/>
</dbReference>
<dbReference type="SMR" id="Q8J2Q9"/>
<dbReference type="STRING" id="334819.Q8J2Q9"/>
<dbReference type="EnsemblFungi" id="FVEG_00322T0">
    <property type="protein sequence ID" value="FVEG_00322T0"/>
    <property type="gene ID" value="FVEG_00322"/>
</dbReference>
<dbReference type="GeneID" id="30058699"/>
<dbReference type="KEGG" id="fvr:FVEG_00322"/>
<dbReference type="eggNOG" id="KOG0756">
    <property type="taxonomic scope" value="Eukaryota"/>
</dbReference>
<dbReference type="OMA" id="YQGDNPK"/>
<dbReference type="Proteomes" id="UP000009096">
    <property type="component" value="Chromosome 1"/>
</dbReference>
<dbReference type="GO" id="GO:0005743">
    <property type="term" value="C:mitochondrial inner membrane"/>
    <property type="evidence" value="ECO:0007669"/>
    <property type="project" value="UniProtKB-SubCell"/>
</dbReference>
<dbReference type="GO" id="GO:0071913">
    <property type="term" value="F:citrate secondary active transmembrane transporter activity"/>
    <property type="evidence" value="ECO:0007669"/>
    <property type="project" value="TreeGrafter"/>
</dbReference>
<dbReference type="GO" id="GO:1900541">
    <property type="term" value="P:fumonisin biosynthetic process"/>
    <property type="evidence" value="ECO:0000315"/>
    <property type="project" value="GO_Central"/>
</dbReference>
<dbReference type="GO" id="GO:0006843">
    <property type="term" value="P:mitochondrial citrate transmembrane transport"/>
    <property type="evidence" value="ECO:0007669"/>
    <property type="project" value="TreeGrafter"/>
</dbReference>
<dbReference type="FunFam" id="1.50.40.10:FF:000064">
    <property type="entry name" value="Mitochondrial tricarboxylate transporter (Ctp)"/>
    <property type="match status" value="1"/>
</dbReference>
<dbReference type="Gene3D" id="1.50.40.10">
    <property type="entry name" value="Mitochondrial carrier domain"/>
    <property type="match status" value="2"/>
</dbReference>
<dbReference type="InterPro" id="IPR018108">
    <property type="entry name" value="Mitochondrial_sb/sol_carrier"/>
</dbReference>
<dbReference type="InterPro" id="IPR023395">
    <property type="entry name" value="Mt_carrier_dom_sf"/>
</dbReference>
<dbReference type="InterPro" id="IPR049563">
    <property type="entry name" value="TXTP-like"/>
</dbReference>
<dbReference type="PANTHER" id="PTHR45788">
    <property type="entry name" value="SUCCINATE/FUMARATE MITOCHONDRIAL TRANSPORTER-RELATED"/>
    <property type="match status" value="1"/>
</dbReference>
<dbReference type="PANTHER" id="PTHR45788:SF4">
    <property type="entry name" value="TRICARBOXYLATE TRANSPORT PROTEIN, MITOCHONDRIAL"/>
    <property type="match status" value="1"/>
</dbReference>
<dbReference type="Pfam" id="PF00153">
    <property type="entry name" value="Mito_carr"/>
    <property type="match status" value="3"/>
</dbReference>
<dbReference type="SUPFAM" id="SSF103506">
    <property type="entry name" value="Mitochondrial carrier"/>
    <property type="match status" value="1"/>
</dbReference>
<dbReference type="PROSITE" id="PS50920">
    <property type="entry name" value="SOLCAR"/>
    <property type="match status" value="3"/>
</dbReference>
<name>FUM11_GIBM7</name>
<evidence type="ECO:0000255" key="1"/>
<evidence type="ECO:0000255" key="2">
    <source>
        <dbReference type="PROSITE-ProRule" id="PRU00282"/>
    </source>
</evidence>
<evidence type="ECO:0000269" key="3">
    <source>
    </source>
</evidence>
<evidence type="ECO:0000269" key="4">
    <source>
    </source>
</evidence>
<evidence type="ECO:0000303" key="5">
    <source>
    </source>
</evidence>
<evidence type="ECO:0000305" key="6"/>
<evidence type="ECO:0000305" key="7">
    <source>
    </source>
</evidence>
<keyword id="KW-0472">Membrane</keyword>
<keyword id="KW-0496">Mitochondrion</keyword>
<keyword id="KW-0999">Mitochondrion inner membrane</keyword>
<keyword id="KW-1185">Reference proteome</keyword>
<keyword id="KW-0677">Repeat</keyword>
<keyword id="KW-0812">Transmembrane</keyword>
<keyword id="KW-1133">Transmembrane helix</keyword>
<keyword id="KW-0813">Transport</keyword>
<gene>
    <name evidence="5" type="primary">FUM11</name>
    <name type="ORF">FVEG_00322</name>
</gene>
<protein>
    <recommendedName>
        <fullName evidence="5">Tricarboxylate transporter FUM11</fullName>
    </recommendedName>
    <alternativeName>
        <fullName evidence="5">Fumonisin biosynthesis cluster protein 11</fullName>
    </alternativeName>
</protein>
<feature type="chain" id="PRO_0000441150" description="Tricarboxylate transporter FUM11">
    <location>
        <begin position="1"/>
        <end position="306"/>
    </location>
</feature>
<feature type="transmembrane region" description="Helical; Name=1" evidence="1">
    <location>
        <begin position="24"/>
        <end position="44"/>
    </location>
</feature>
<feature type="transmembrane region" description="Helical; Name=2" evidence="1">
    <location>
        <begin position="67"/>
        <end position="87"/>
    </location>
</feature>
<feature type="transmembrane region" description="Helical; Name=3" evidence="1">
    <location>
        <begin position="113"/>
        <end position="133"/>
    </location>
</feature>
<feature type="transmembrane region" description="Helical; Name=4" evidence="1">
    <location>
        <begin position="170"/>
        <end position="189"/>
    </location>
</feature>
<feature type="transmembrane region" description="Helical; Name=5" evidence="1">
    <location>
        <begin position="209"/>
        <end position="229"/>
    </location>
</feature>
<feature type="transmembrane region" description="Helical; Name=6" evidence="1">
    <location>
        <begin position="267"/>
        <end position="286"/>
    </location>
</feature>
<feature type="repeat" description="Solcar 1" evidence="2">
    <location>
        <begin position="18"/>
        <end position="98"/>
    </location>
</feature>
<feature type="repeat" description="Solcar 2" evidence="2">
    <location>
        <begin position="109"/>
        <end position="195"/>
    </location>
</feature>
<feature type="repeat" description="Solcar 3" evidence="2">
    <location>
        <begin position="206"/>
        <end position="292"/>
    </location>
</feature>
<organism>
    <name type="scientific">Gibberella moniliformis (strain M3125 / FGSC 7600)</name>
    <name type="common">Maize ear and stalk rot fungus</name>
    <name type="synonym">Fusarium verticillioides</name>
    <dbReference type="NCBI Taxonomy" id="334819"/>
    <lineage>
        <taxon>Eukaryota</taxon>
        <taxon>Fungi</taxon>
        <taxon>Dikarya</taxon>
        <taxon>Ascomycota</taxon>
        <taxon>Pezizomycotina</taxon>
        <taxon>Sordariomycetes</taxon>
        <taxon>Hypocreomycetidae</taxon>
        <taxon>Hypocreales</taxon>
        <taxon>Nectriaceae</taxon>
        <taxon>Fusarium</taxon>
        <taxon>Fusarium fujikuroi species complex</taxon>
    </lineage>
</organism>
<comment type="function">
    <text evidence="3 4 7">Tricarboxylate transporter; part of the gene cluster that mediates the biosynthesis of fumonisins B1 (FB1), B2 (FB2), B3 (FB3), and B4 (FB4), which are carcinogenic mycotoxins (PubMed:12620260, PubMed:17147424). Within the pathway, FUM11 is involved the addition of the tricarballylic moieties to the carbon backbone. FUM11 makes a tricarboxylic acid precursor available for fumonisin biosynthesis via its export from the mitochondria (PubMed:17147424). The biosynthesis starts with the FUM1-catalyzed carbon chain assembly from one molecule of acetyl-CoA, eight molecules of malonyl-CoA, and two molecules of methionine (in S-adenosyl form). The C18 polyketide chain is released from the enzyme by a nucleophilic attack of a carbanion, which is derived from R-carbon of alanine by decarboxylation, on the carbonyl carbon of polyketide acyl chain. This step is catalyzed by the pyridoxal 5'-phosphate-dependent aminoacyl transferase FUM8. The resultant 3-keto intermediate is then stereospecifically reduced to a 3-hydroxyl product by reductase FUM13. Subsequent oxidations at C-10 by the cytochrome P450 monooxygenase FUM2, C-14 and C-15 by FUM6, FUM12 or FUM15, tricarballylic esterification of the hydroxyl groups on C-14 and C-15 by acyltransferase FUM14, and C-5 hydroxylation by 2-keto-glutarate-dependent dioxygenase FUM3 furnish the biosynthesis of fumonisins. The tricarballylic moieties are most likely derived from the citric acid cycle, and their addition to the carbon backbone may involve FUM7, FUM10, FUM11 and FUM14 (Probable).</text>
</comment>
<comment type="pathway">
    <text evidence="3 4">Mycotoxin biosynthesis.</text>
</comment>
<comment type="subcellular location">
    <subcellularLocation>
        <location evidence="6">Mitochondrion inner membrane</location>
        <topology evidence="1">Multi-pass membrane protein</topology>
    </subcellularLocation>
</comment>
<comment type="disruption phenotype">
    <text evidence="4">Produces fumonisins that lack one of the tricarballylic ester functions (PubMed:17147424).</text>
</comment>
<comment type="similarity">
    <text evidence="6">Belongs to the mitochondrial carrier (TC 2.A.29) family.</text>
</comment>
<comment type="sequence caution" evidence="6">
    <conflict type="erroneous gene model prediction">
        <sequence resource="EMBL-CDS" id="EWG36202"/>
    </conflict>
</comment>
<sequence>MSLYDKSVTATRSAHRTSDTLHSLVAGSVAGGLEIAITYPAEFAKTRLQLNQVSGRNKQNVPWPRFGLQWYSGCIPFLIGNSVKTSIRFVSFDGYQKLLADDDGNISRFGILLAGFGAGATESLLAVTPSERIKTIIIEDRRLEKPRIRNSFHAMSIIARDHGLSGFFQGFWPTTARQSAGSAIRLGSYTFLKQVVQSRTPQGGKIGTVKTFIIGSLAGLITVYLTQPLDTIKTRMQRLEARTRYGNAFICARGILEQEGFTAFWSGAVARSLRLVMSGGIVFMVYEKVVEGLDVISPAKRYEIAA</sequence>
<proteinExistence type="inferred from homology"/>
<reference key="1">
    <citation type="journal article" date="2003" name="Fungal Genet. Biol.">
        <title>Co-expression of 15 contiguous genes delineates a fumonisin biosynthetic gene cluster in Gibberella moniliformis.</title>
        <authorList>
            <person name="Proctor R.H."/>
            <person name="Brown D.W."/>
            <person name="Plattner R.D."/>
            <person name="Desjardins A.E."/>
        </authorList>
    </citation>
    <scope>NUCLEOTIDE SEQUENCE [GENOMIC DNA]</scope>
    <scope>PATHWAY</scope>
    <source>
        <strain>M3125 / FGSC 7600</strain>
    </source>
</reference>
<reference key="2">
    <citation type="journal article" date="2010" name="Nature">
        <title>Comparative genomics reveals mobile pathogenicity chromosomes in Fusarium.</title>
        <authorList>
            <person name="Ma L.-J."/>
            <person name="van der Does H.C."/>
            <person name="Borkovich K.A."/>
            <person name="Coleman J.J."/>
            <person name="Daboussi M.-J."/>
            <person name="Di Pietro A."/>
            <person name="Dufresne M."/>
            <person name="Freitag M."/>
            <person name="Grabherr M."/>
            <person name="Henrissat B."/>
            <person name="Houterman P.M."/>
            <person name="Kang S."/>
            <person name="Shim W.-B."/>
            <person name="Woloshuk C."/>
            <person name="Xie X."/>
            <person name="Xu J.-R."/>
            <person name="Antoniw J."/>
            <person name="Baker S.E."/>
            <person name="Bluhm B.H."/>
            <person name="Breakspear A."/>
            <person name="Brown D.W."/>
            <person name="Butchko R.A.E."/>
            <person name="Chapman S."/>
            <person name="Coulson R."/>
            <person name="Coutinho P.M."/>
            <person name="Danchin E.G.J."/>
            <person name="Diener A."/>
            <person name="Gale L.R."/>
            <person name="Gardiner D.M."/>
            <person name="Goff S."/>
            <person name="Hammond-Kosack K.E."/>
            <person name="Hilburn K."/>
            <person name="Hua-Van A."/>
            <person name="Jonkers W."/>
            <person name="Kazan K."/>
            <person name="Kodira C.D."/>
            <person name="Koehrsen M."/>
            <person name="Kumar L."/>
            <person name="Lee Y.-H."/>
            <person name="Li L."/>
            <person name="Manners J.M."/>
            <person name="Miranda-Saavedra D."/>
            <person name="Mukherjee M."/>
            <person name="Park G."/>
            <person name="Park J."/>
            <person name="Park S.-Y."/>
            <person name="Proctor R.H."/>
            <person name="Regev A."/>
            <person name="Ruiz-Roldan M.C."/>
            <person name="Sain D."/>
            <person name="Sakthikumar S."/>
            <person name="Sykes S."/>
            <person name="Schwartz D.C."/>
            <person name="Turgeon B.G."/>
            <person name="Wapinski I."/>
            <person name="Yoder O."/>
            <person name="Young S."/>
            <person name="Zeng Q."/>
            <person name="Zhou S."/>
            <person name="Galagan J."/>
            <person name="Cuomo C.A."/>
            <person name="Kistler H.C."/>
            <person name="Rep M."/>
        </authorList>
    </citation>
    <scope>NUCLEOTIDE SEQUENCE [LARGE SCALE GENOMIC DNA]</scope>
    <source>
        <strain>M3125 / FGSC 7600</strain>
    </source>
</reference>
<reference key="3">
    <citation type="journal article" date="2006" name="J. Agric. Food Chem.">
        <title>Deletion analysis of FUM genes involved in tricarballylic ester formation during fumonisin biosynthesis.</title>
        <authorList>
            <person name="Butchko R.A."/>
            <person name="Plattner R.D."/>
            <person name="Proctor R.H."/>
        </authorList>
    </citation>
    <scope>FUNCTION</scope>
    <scope>DISRUPTION PHENOTYPE</scope>
    <scope>PATHWAY</scope>
</reference>